<accession>P65895</accession>
<accession>Q99V23</accession>
<feature type="chain" id="PRO_0000151479" description="Phosphoribosylamine--glycine ligase">
    <location>
        <begin position="1"/>
        <end position="415"/>
    </location>
</feature>
<feature type="domain" description="ATP-grasp" evidence="2">
    <location>
        <begin position="108"/>
        <end position="311"/>
    </location>
</feature>
<feature type="binding site" evidence="2">
    <location>
        <begin position="134"/>
        <end position="191"/>
    </location>
    <ligand>
        <name>ATP</name>
        <dbReference type="ChEBI" id="CHEBI:30616"/>
    </ligand>
</feature>
<feature type="binding site" evidence="2">
    <location>
        <position position="281"/>
    </location>
    <ligand>
        <name>Mg(2+)</name>
        <dbReference type="ChEBI" id="CHEBI:18420"/>
    </ligand>
</feature>
<feature type="binding site" evidence="2">
    <location>
        <position position="283"/>
    </location>
    <ligand>
        <name>Mg(2+)</name>
        <dbReference type="ChEBI" id="CHEBI:18420"/>
    </ligand>
</feature>
<gene>
    <name evidence="2" type="primary">purD</name>
    <name type="ordered locus">SAV1074</name>
</gene>
<keyword id="KW-0067">ATP-binding</keyword>
<keyword id="KW-0436">Ligase</keyword>
<keyword id="KW-0460">Magnesium</keyword>
<keyword id="KW-0464">Manganese</keyword>
<keyword id="KW-0479">Metal-binding</keyword>
<keyword id="KW-0547">Nucleotide-binding</keyword>
<keyword id="KW-0658">Purine biosynthesis</keyword>
<protein>
    <recommendedName>
        <fullName evidence="2">Phosphoribosylamine--glycine ligase</fullName>
        <ecNumber evidence="2">6.3.4.13</ecNumber>
    </recommendedName>
    <alternativeName>
        <fullName evidence="2">GARS</fullName>
    </alternativeName>
    <alternativeName>
        <fullName evidence="2">Glycinamide ribonucleotide synthetase</fullName>
    </alternativeName>
    <alternativeName>
        <fullName evidence="2">Phosphoribosylglycinamide synthetase</fullName>
    </alternativeName>
</protein>
<organism>
    <name type="scientific">Staphylococcus aureus (strain Mu50 / ATCC 700699)</name>
    <dbReference type="NCBI Taxonomy" id="158878"/>
    <lineage>
        <taxon>Bacteria</taxon>
        <taxon>Bacillati</taxon>
        <taxon>Bacillota</taxon>
        <taxon>Bacilli</taxon>
        <taxon>Bacillales</taxon>
        <taxon>Staphylococcaceae</taxon>
        <taxon>Staphylococcus</taxon>
    </lineage>
</organism>
<comment type="catalytic activity">
    <reaction evidence="2">
        <text>5-phospho-beta-D-ribosylamine + glycine + ATP = N(1)-(5-phospho-beta-D-ribosyl)glycinamide + ADP + phosphate + H(+)</text>
        <dbReference type="Rhea" id="RHEA:17453"/>
        <dbReference type="ChEBI" id="CHEBI:15378"/>
        <dbReference type="ChEBI" id="CHEBI:30616"/>
        <dbReference type="ChEBI" id="CHEBI:43474"/>
        <dbReference type="ChEBI" id="CHEBI:57305"/>
        <dbReference type="ChEBI" id="CHEBI:58681"/>
        <dbReference type="ChEBI" id="CHEBI:143788"/>
        <dbReference type="ChEBI" id="CHEBI:456216"/>
        <dbReference type="EC" id="6.3.4.13"/>
    </reaction>
</comment>
<comment type="cofactor">
    <cofactor evidence="1">
        <name>Mg(2+)</name>
        <dbReference type="ChEBI" id="CHEBI:18420"/>
    </cofactor>
    <cofactor evidence="1">
        <name>Mn(2+)</name>
        <dbReference type="ChEBI" id="CHEBI:29035"/>
    </cofactor>
    <text evidence="1">Binds 1 Mg(2+) or Mn(2+) ion per subunit.</text>
</comment>
<comment type="pathway">
    <text evidence="2">Purine metabolism; IMP biosynthesis via de novo pathway; N(1)-(5-phospho-D-ribosyl)glycinamide from 5-phospho-alpha-D-ribose 1-diphosphate: step 2/2.</text>
</comment>
<comment type="similarity">
    <text evidence="2">Belongs to the GARS family.</text>
</comment>
<comment type="sequence caution" evidence="3">
    <conflict type="erroneous initiation">
        <sequence resource="EMBL-CDS" id="BAB57236"/>
    </conflict>
</comment>
<name>PUR2_STAAM</name>
<reference key="1">
    <citation type="journal article" date="2001" name="Lancet">
        <title>Whole genome sequencing of meticillin-resistant Staphylococcus aureus.</title>
        <authorList>
            <person name="Kuroda M."/>
            <person name="Ohta T."/>
            <person name="Uchiyama I."/>
            <person name="Baba T."/>
            <person name="Yuzawa H."/>
            <person name="Kobayashi I."/>
            <person name="Cui L."/>
            <person name="Oguchi A."/>
            <person name="Aoki K."/>
            <person name="Nagai Y."/>
            <person name="Lian J.-Q."/>
            <person name="Ito T."/>
            <person name="Kanamori M."/>
            <person name="Matsumaru H."/>
            <person name="Maruyama A."/>
            <person name="Murakami H."/>
            <person name="Hosoyama A."/>
            <person name="Mizutani-Ui Y."/>
            <person name="Takahashi N.K."/>
            <person name="Sawano T."/>
            <person name="Inoue R."/>
            <person name="Kaito C."/>
            <person name="Sekimizu K."/>
            <person name="Hirakawa H."/>
            <person name="Kuhara S."/>
            <person name="Goto S."/>
            <person name="Yabuzaki J."/>
            <person name="Kanehisa M."/>
            <person name="Yamashita A."/>
            <person name="Oshima K."/>
            <person name="Furuya K."/>
            <person name="Yoshino C."/>
            <person name="Shiba T."/>
            <person name="Hattori M."/>
            <person name="Ogasawara N."/>
            <person name="Hayashi H."/>
            <person name="Hiramatsu K."/>
        </authorList>
    </citation>
    <scope>NUCLEOTIDE SEQUENCE [LARGE SCALE GENOMIC DNA]</scope>
    <source>
        <strain>Mu50 / ATCC 700699</strain>
    </source>
</reference>
<proteinExistence type="inferred from homology"/>
<evidence type="ECO:0000250" key="1"/>
<evidence type="ECO:0000255" key="2">
    <source>
        <dbReference type="HAMAP-Rule" id="MF_00138"/>
    </source>
</evidence>
<evidence type="ECO:0000305" key="3"/>
<dbReference type="EC" id="6.3.4.13" evidence="2"/>
<dbReference type="EMBL" id="BA000017">
    <property type="protein sequence ID" value="BAB57236.1"/>
    <property type="status" value="ALT_INIT"/>
    <property type="molecule type" value="Genomic_DNA"/>
</dbReference>
<dbReference type="RefSeq" id="WP_001101899.1">
    <property type="nucleotide sequence ID" value="NC_002758.2"/>
</dbReference>
<dbReference type="SMR" id="P65895"/>
<dbReference type="KEGG" id="sav:SAV1074"/>
<dbReference type="HOGENOM" id="CLU_027420_3_1_9"/>
<dbReference type="UniPathway" id="UPA00074">
    <property type="reaction ID" value="UER00125"/>
</dbReference>
<dbReference type="Proteomes" id="UP000002481">
    <property type="component" value="Chromosome"/>
</dbReference>
<dbReference type="GO" id="GO:0005524">
    <property type="term" value="F:ATP binding"/>
    <property type="evidence" value="ECO:0007669"/>
    <property type="project" value="UniProtKB-KW"/>
</dbReference>
<dbReference type="GO" id="GO:0046872">
    <property type="term" value="F:metal ion binding"/>
    <property type="evidence" value="ECO:0007669"/>
    <property type="project" value="UniProtKB-KW"/>
</dbReference>
<dbReference type="GO" id="GO:0004637">
    <property type="term" value="F:phosphoribosylamine-glycine ligase activity"/>
    <property type="evidence" value="ECO:0007669"/>
    <property type="project" value="UniProtKB-UniRule"/>
</dbReference>
<dbReference type="GO" id="GO:0006189">
    <property type="term" value="P:'de novo' IMP biosynthetic process"/>
    <property type="evidence" value="ECO:0007669"/>
    <property type="project" value="UniProtKB-UniRule"/>
</dbReference>
<dbReference type="GO" id="GO:0009113">
    <property type="term" value="P:purine nucleobase biosynthetic process"/>
    <property type="evidence" value="ECO:0007669"/>
    <property type="project" value="InterPro"/>
</dbReference>
<dbReference type="FunFam" id="3.40.50.20:FF:000006">
    <property type="entry name" value="Phosphoribosylamine--glycine ligase, chloroplastic"/>
    <property type="match status" value="1"/>
</dbReference>
<dbReference type="Gene3D" id="3.40.50.20">
    <property type="match status" value="1"/>
</dbReference>
<dbReference type="Gene3D" id="3.30.1490.20">
    <property type="entry name" value="ATP-grasp fold, A domain"/>
    <property type="match status" value="1"/>
</dbReference>
<dbReference type="Gene3D" id="3.30.470.20">
    <property type="entry name" value="ATP-grasp fold, B domain"/>
    <property type="match status" value="1"/>
</dbReference>
<dbReference type="Gene3D" id="3.90.600.10">
    <property type="entry name" value="Phosphoribosylglycinamide synthetase, C-terminal domain"/>
    <property type="match status" value="1"/>
</dbReference>
<dbReference type="HAMAP" id="MF_00138">
    <property type="entry name" value="GARS"/>
    <property type="match status" value="1"/>
</dbReference>
<dbReference type="InterPro" id="IPR011761">
    <property type="entry name" value="ATP-grasp"/>
</dbReference>
<dbReference type="InterPro" id="IPR013815">
    <property type="entry name" value="ATP_grasp_subdomain_1"/>
</dbReference>
<dbReference type="InterPro" id="IPR016185">
    <property type="entry name" value="PreATP-grasp_dom_sf"/>
</dbReference>
<dbReference type="InterPro" id="IPR020561">
    <property type="entry name" value="PRibGlycinamid_synth_ATP-grasp"/>
</dbReference>
<dbReference type="InterPro" id="IPR000115">
    <property type="entry name" value="PRibGlycinamide_synth"/>
</dbReference>
<dbReference type="InterPro" id="IPR020560">
    <property type="entry name" value="PRibGlycinamide_synth_C-dom"/>
</dbReference>
<dbReference type="InterPro" id="IPR037123">
    <property type="entry name" value="PRibGlycinamide_synth_C_sf"/>
</dbReference>
<dbReference type="InterPro" id="IPR020559">
    <property type="entry name" value="PRibGlycinamide_synth_CS"/>
</dbReference>
<dbReference type="InterPro" id="IPR020562">
    <property type="entry name" value="PRibGlycinamide_synth_N"/>
</dbReference>
<dbReference type="InterPro" id="IPR011054">
    <property type="entry name" value="Rudment_hybrid_motif"/>
</dbReference>
<dbReference type="NCBIfam" id="TIGR00877">
    <property type="entry name" value="purD"/>
    <property type="match status" value="1"/>
</dbReference>
<dbReference type="PANTHER" id="PTHR43472">
    <property type="entry name" value="PHOSPHORIBOSYLAMINE--GLYCINE LIGASE"/>
    <property type="match status" value="1"/>
</dbReference>
<dbReference type="PANTHER" id="PTHR43472:SF1">
    <property type="entry name" value="PHOSPHORIBOSYLAMINE--GLYCINE LIGASE, CHLOROPLASTIC"/>
    <property type="match status" value="1"/>
</dbReference>
<dbReference type="Pfam" id="PF01071">
    <property type="entry name" value="GARS_A"/>
    <property type="match status" value="1"/>
</dbReference>
<dbReference type="Pfam" id="PF02843">
    <property type="entry name" value="GARS_C"/>
    <property type="match status" value="1"/>
</dbReference>
<dbReference type="Pfam" id="PF02844">
    <property type="entry name" value="GARS_N"/>
    <property type="match status" value="1"/>
</dbReference>
<dbReference type="SMART" id="SM01209">
    <property type="entry name" value="GARS_A"/>
    <property type="match status" value="1"/>
</dbReference>
<dbReference type="SMART" id="SM01210">
    <property type="entry name" value="GARS_C"/>
    <property type="match status" value="1"/>
</dbReference>
<dbReference type="SUPFAM" id="SSF56059">
    <property type="entry name" value="Glutathione synthetase ATP-binding domain-like"/>
    <property type="match status" value="1"/>
</dbReference>
<dbReference type="SUPFAM" id="SSF52440">
    <property type="entry name" value="PreATP-grasp domain"/>
    <property type="match status" value="1"/>
</dbReference>
<dbReference type="SUPFAM" id="SSF51246">
    <property type="entry name" value="Rudiment single hybrid motif"/>
    <property type="match status" value="1"/>
</dbReference>
<dbReference type="PROSITE" id="PS50975">
    <property type="entry name" value="ATP_GRASP"/>
    <property type="match status" value="1"/>
</dbReference>
<dbReference type="PROSITE" id="PS00184">
    <property type="entry name" value="GARS"/>
    <property type="match status" value="1"/>
</dbReference>
<sequence>MNVLVIGAGGREHALAYKLNQSNLVKQEFVIPGNEAMTPIAEVHTEISESNHQGILDFAKQQNVDWVVIGPEQPLIDGLADILRANGFKVFGPNKQAAQIEGSKLFAKKIMKKYNIPTADYKEVERKKDALTYIENCELPVVVKKDGLAAGKGVIIADTIEAARSAIEIMYGDEEEGTVVFETFLEGEEFSLMTFVNGDLAVPFDCIAQDHKRAFDHDEGPNTGGMGAYCPVPHISDDVLKLTNETIAQPIAKAMLNEGYQFFGVLYIGAILTKDGPKVIEFNARFGDPEAQVLLSRMESDLMQHIIDLDEGKRTEFKWKNESIVGVMLASKGYPDAYEKGHKVSGFDLNENYFVSGLKKQGDTFVTSGGRVILAIGKGDNVQDAQRDAYEKVSQIQSDHLFYRHDIANKALQLK</sequence>